<accession>Q65UP5</accession>
<organism>
    <name type="scientific">Mannheimia succiniciproducens (strain KCTC 0769BP / MBEL55E)</name>
    <dbReference type="NCBI Taxonomy" id="221988"/>
    <lineage>
        <taxon>Bacteria</taxon>
        <taxon>Pseudomonadati</taxon>
        <taxon>Pseudomonadota</taxon>
        <taxon>Gammaproteobacteria</taxon>
        <taxon>Pasteurellales</taxon>
        <taxon>Pasteurellaceae</taxon>
        <taxon>Basfia</taxon>
    </lineage>
</organism>
<proteinExistence type="inferred from homology"/>
<comment type="function">
    <text evidence="1">Catalyzes the attachment of L-aspartate to tRNA(Asp) in a two-step reaction: L-aspartate is first activated by ATP to form Asp-AMP and then transferred to the acceptor end of tRNA(Asp).</text>
</comment>
<comment type="catalytic activity">
    <reaction evidence="1">
        <text>tRNA(Asp) + L-aspartate + ATP = L-aspartyl-tRNA(Asp) + AMP + diphosphate</text>
        <dbReference type="Rhea" id="RHEA:19649"/>
        <dbReference type="Rhea" id="RHEA-COMP:9660"/>
        <dbReference type="Rhea" id="RHEA-COMP:9678"/>
        <dbReference type="ChEBI" id="CHEBI:29991"/>
        <dbReference type="ChEBI" id="CHEBI:30616"/>
        <dbReference type="ChEBI" id="CHEBI:33019"/>
        <dbReference type="ChEBI" id="CHEBI:78442"/>
        <dbReference type="ChEBI" id="CHEBI:78516"/>
        <dbReference type="ChEBI" id="CHEBI:456215"/>
        <dbReference type="EC" id="6.1.1.12"/>
    </reaction>
</comment>
<comment type="subunit">
    <text evidence="1">Homodimer.</text>
</comment>
<comment type="subcellular location">
    <subcellularLocation>
        <location evidence="1">Cytoplasm</location>
    </subcellularLocation>
</comment>
<comment type="similarity">
    <text evidence="1">Belongs to the class-II aminoacyl-tRNA synthetase family. Type 1 subfamily.</text>
</comment>
<sequence length="590" mass="66646">MMRSHYCGGLNRENIGQEVTLSGWVHRRRDLGGLIFIDMRDREGIVQVCFDPKYQQALTRAASLRNEFCIQIKGEVIARPDNQINKNMATGEVEVLAKELSVYNAADVLPLDFNQNNTEEQRLKYRYLDLRRPEMAQRLKTRAKITSFVRRFMDDNGFLDIETPMLTKATPEGARDYLVPSRVHKGKFYALPQSPQLFKQLLMMSGFDRYYQIVKCFRDEDLRADRQPEFTQIDVETSFLTAPEVREIMEKMIHGLWLNTINVDLGKFPVMTWTEAMQRFGSDKPDLRNPLEITDVADIVKDVDFKVFSGPANDPNGRVAVIRVPNGASVTRKQIDEYTQFVGIYGAKGLAWLKVNDVNAGLEGVQSPIAKFLTEEKIKAIFDRTSAQTGDILFFGADKWQTATDALGALRLKLGRDLALTQLDQWAPLWVIDFPMFERDEEGNLAAMHHPFTSPKDFSPEQLEADPTGAVANAYDMVINGYEVGGGSVRIFDPKMQQTVFRILGIDEQQQREKFGFLLDALKFGTPPHAGLAFGLDRLTMLLTGTDNIRDVIAFPKTTAAACLMTEAPSFANPQALEELSISVVKTDKE</sequence>
<evidence type="ECO:0000255" key="1">
    <source>
        <dbReference type="HAMAP-Rule" id="MF_00044"/>
    </source>
</evidence>
<gene>
    <name evidence="1" type="primary">aspS</name>
    <name type="ordered locus">MS0708</name>
</gene>
<reference key="1">
    <citation type="journal article" date="2004" name="Nat. Biotechnol.">
        <title>The genome sequence of the capnophilic rumen bacterium Mannheimia succiniciproducens.</title>
        <authorList>
            <person name="Hong S.H."/>
            <person name="Kim J.S."/>
            <person name="Lee S.Y."/>
            <person name="In Y.H."/>
            <person name="Choi S.S."/>
            <person name="Rih J.-K."/>
            <person name="Kim C.H."/>
            <person name="Jeong H."/>
            <person name="Hur C.G."/>
            <person name="Kim J.J."/>
        </authorList>
    </citation>
    <scope>NUCLEOTIDE SEQUENCE [LARGE SCALE GENOMIC DNA]</scope>
    <source>
        <strain>KCTC 0769BP / MBEL55E</strain>
    </source>
</reference>
<dbReference type="EC" id="6.1.1.12" evidence="1"/>
<dbReference type="EMBL" id="AE016827">
    <property type="protein sequence ID" value="AAU37315.1"/>
    <property type="molecule type" value="Genomic_DNA"/>
</dbReference>
<dbReference type="RefSeq" id="WP_011199887.1">
    <property type="nucleotide sequence ID" value="NC_006300.1"/>
</dbReference>
<dbReference type="SMR" id="Q65UP5"/>
<dbReference type="STRING" id="221988.MS0708"/>
<dbReference type="KEGG" id="msu:MS0708"/>
<dbReference type="eggNOG" id="COG0173">
    <property type="taxonomic scope" value="Bacteria"/>
</dbReference>
<dbReference type="HOGENOM" id="CLU_014330_3_2_6"/>
<dbReference type="OrthoDB" id="9802326at2"/>
<dbReference type="Proteomes" id="UP000000607">
    <property type="component" value="Chromosome"/>
</dbReference>
<dbReference type="GO" id="GO:0005737">
    <property type="term" value="C:cytoplasm"/>
    <property type="evidence" value="ECO:0007669"/>
    <property type="project" value="UniProtKB-SubCell"/>
</dbReference>
<dbReference type="GO" id="GO:0004815">
    <property type="term" value="F:aspartate-tRNA ligase activity"/>
    <property type="evidence" value="ECO:0007669"/>
    <property type="project" value="UniProtKB-UniRule"/>
</dbReference>
<dbReference type="GO" id="GO:0005524">
    <property type="term" value="F:ATP binding"/>
    <property type="evidence" value="ECO:0007669"/>
    <property type="project" value="UniProtKB-UniRule"/>
</dbReference>
<dbReference type="GO" id="GO:0003676">
    <property type="term" value="F:nucleic acid binding"/>
    <property type="evidence" value="ECO:0007669"/>
    <property type="project" value="InterPro"/>
</dbReference>
<dbReference type="GO" id="GO:0006422">
    <property type="term" value="P:aspartyl-tRNA aminoacylation"/>
    <property type="evidence" value="ECO:0007669"/>
    <property type="project" value="UniProtKB-UniRule"/>
</dbReference>
<dbReference type="CDD" id="cd00777">
    <property type="entry name" value="AspRS_core"/>
    <property type="match status" value="1"/>
</dbReference>
<dbReference type="CDD" id="cd04317">
    <property type="entry name" value="EcAspRS_like_N"/>
    <property type="match status" value="1"/>
</dbReference>
<dbReference type="FunFam" id="2.40.50.140:FF:000080">
    <property type="entry name" value="Aspartate--tRNA ligase"/>
    <property type="match status" value="1"/>
</dbReference>
<dbReference type="Gene3D" id="3.30.930.10">
    <property type="entry name" value="Bira Bifunctional Protein, Domain 2"/>
    <property type="match status" value="1"/>
</dbReference>
<dbReference type="Gene3D" id="3.30.1360.30">
    <property type="entry name" value="GAD-like domain"/>
    <property type="match status" value="1"/>
</dbReference>
<dbReference type="Gene3D" id="2.40.50.140">
    <property type="entry name" value="Nucleic acid-binding proteins"/>
    <property type="match status" value="1"/>
</dbReference>
<dbReference type="HAMAP" id="MF_00044">
    <property type="entry name" value="Asp_tRNA_synth_type1"/>
    <property type="match status" value="1"/>
</dbReference>
<dbReference type="InterPro" id="IPR004364">
    <property type="entry name" value="Aa-tRNA-synt_II"/>
</dbReference>
<dbReference type="InterPro" id="IPR006195">
    <property type="entry name" value="aa-tRNA-synth_II"/>
</dbReference>
<dbReference type="InterPro" id="IPR045864">
    <property type="entry name" value="aa-tRNA-synth_II/BPL/LPL"/>
</dbReference>
<dbReference type="InterPro" id="IPR004524">
    <property type="entry name" value="Asp-tRNA-ligase_1"/>
</dbReference>
<dbReference type="InterPro" id="IPR047089">
    <property type="entry name" value="Asp-tRNA-ligase_1_N"/>
</dbReference>
<dbReference type="InterPro" id="IPR002312">
    <property type="entry name" value="Asp/Asn-tRNA-synth_IIb"/>
</dbReference>
<dbReference type="InterPro" id="IPR047090">
    <property type="entry name" value="AspRS_core"/>
</dbReference>
<dbReference type="InterPro" id="IPR004115">
    <property type="entry name" value="GAD-like_sf"/>
</dbReference>
<dbReference type="InterPro" id="IPR029351">
    <property type="entry name" value="GAD_dom"/>
</dbReference>
<dbReference type="InterPro" id="IPR012340">
    <property type="entry name" value="NA-bd_OB-fold"/>
</dbReference>
<dbReference type="InterPro" id="IPR004365">
    <property type="entry name" value="NA-bd_OB_tRNA"/>
</dbReference>
<dbReference type="NCBIfam" id="TIGR00459">
    <property type="entry name" value="aspS_bact"/>
    <property type="match status" value="1"/>
</dbReference>
<dbReference type="NCBIfam" id="NF001750">
    <property type="entry name" value="PRK00476.1"/>
    <property type="match status" value="1"/>
</dbReference>
<dbReference type="PANTHER" id="PTHR22594:SF5">
    <property type="entry name" value="ASPARTATE--TRNA LIGASE, MITOCHONDRIAL"/>
    <property type="match status" value="1"/>
</dbReference>
<dbReference type="PANTHER" id="PTHR22594">
    <property type="entry name" value="ASPARTYL/LYSYL-TRNA SYNTHETASE"/>
    <property type="match status" value="1"/>
</dbReference>
<dbReference type="Pfam" id="PF02938">
    <property type="entry name" value="GAD"/>
    <property type="match status" value="1"/>
</dbReference>
<dbReference type="Pfam" id="PF00152">
    <property type="entry name" value="tRNA-synt_2"/>
    <property type="match status" value="1"/>
</dbReference>
<dbReference type="Pfam" id="PF01336">
    <property type="entry name" value="tRNA_anti-codon"/>
    <property type="match status" value="1"/>
</dbReference>
<dbReference type="PRINTS" id="PR01042">
    <property type="entry name" value="TRNASYNTHASP"/>
</dbReference>
<dbReference type="SUPFAM" id="SSF55681">
    <property type="entry name" value="Class II aaRS and biotin synthetases"/>
    <property type="match status" value="1"/>
</dbReference>
<dbReference type="SUPFAM" id="SSF55261">
    <property type="entry name" value="GAD domain-like"/>
    <property type="match status" value="1"/>
</dbReference>
<dbReference type="SUPFAM" id="SSF50249">
    <property type="entry name" value="Nucleic acid-binding proteins"/>
    <property type="match status" value="1"/>
</dbReference>
<dbReference type="PROSITE" id="PS50862">
    <property type="entry name" value="AA_TRNA_LIGASE_II"/>
    <property type="match status" value="1"/>
</dbReference>
<feature type="chain" id="PRO_0000110897" description="Aspartate--tRNA ligase">
    <location>
        <begin position="1"/>
        <end position="590"/>
    </location>
</feature>
<feature type="region of interest" description="Aspartate" evidence="1">
    <location>
        <begin position="196"/>
        <end position="199"/>
    </location>
</feature>
<feature type="binding site" evidence="1">
    <location>
        <position position="172"/>
    </location>
    <ligand>
        <name>L-aspartate</name>
        <dbReference type="ChEBI" id="CHEBI:29991"/>
    </ligand>
</feature>
<feature type="binding site" evidence="1">
    <location>
        <begin position="218"/>
        <end position="220"/>
    </location>
    <ligand>
        <name>ATP</name>
        <dbReference type="ChEBI" id="CHEBI:30616"/>
    </ligand>
</feature>
<feature type="binding site" evidence="1">
    <location>
        <position position="218"/>
    </location>
    <ligand>
        <name>L-aspartate</name>
        <dbReference type="ChEBI" id="CHEBI:29991"/>
    </ligand>
</feature>
<feature type="binding site" evidence="1">
    <location>
        <position position="227"/>
    </location>
    <ligand>
        <name>ATP</name>
        <dbReference type="ChEBI" id="CHEBI:30616"/>
    </ligand>
</feature>
<feature type="binding site" evidence="1">
    <location>
        <position position="449"/>
    </location>
    <ligand>
        <name>L-aspartate</name>
        <dbReference type="ChEBI" id="CHEBI:29991"/>
    </ligand>
</feature>
<feature type="binding site" evidence="1">
    <location>
        <position position="483"/>
    </location>
    <ligand>
        <name>ATP</name>
        <dbReference type="ChEBI" id="CHEBI:30616"/>
    </ligand>
</feature>
<feature type="binding site" evidence="1">
    <location>
        <position position="490"/>
    </location>
    <ligand>
        <name>L-aspartate</name>
        <dbReference type="ChEBI" id="CHEBI:29991"/>
    </ligand>
</feature>
<feature type="binding site" evidence="1">
    <location>
        <begin position="535"/>
        <end position="538"/>
    </location>
    <ligand>
        <name>ATP</name>
        <dbReference type="ChEBI" id="CHEBI:30616"/>
    </ligand>
</feature>
<name>SYD_MANSM</name>
<protein>
    <recommendedName>
        <fullName evidence="1">Aspartate--tRNA ligase</fullName>
        <ecNumber evidence="1">6.1.1.12</ecNumber>
    </recommendedName>
    <alternativeName>
        <fullName evidence="1">Aspartyl-tRNA synthetase</fullName>
        <shortName evidence="1">AspRS</shortName>
    </alternativeName>
</protein>
<keyword id="KW-0030">Aminoacyl-tRNA synthetase</keyword>
<keyword id="KW-0067">ATP-binding</keyword>
<keyword id="KW-0963">Cytoplasm</keyword>
<keyword id="KW-0436">Ligase</keyword>
<keyword id="KW-0547">Nucleotide-binding</keyword>
<keyword id="KW-0648">Protein biosynthesis</keyword>